<name>ABF2_CAEEL</name>
<sequence length="85" mass="8931">MFVRSLFLALLLATIVAADIDFSTCARMDVPILKKAAQGLCITSCSMQNCGTGSCKKRSGRPTCVCYRCANGGGDIPLGALIKRG</sequence>
<keyword id="KW-0002">3D-structure</keyword>
<keyword id="KW-0044">Antibiotic</keyword>
<keyword id="KW-0929">Antimicrobial</keyword>
<keyword id="KW-0903">Direct protein sequencing</keyword>
<keyword id="KW-0295">Fungicide</keyword>
<keyword id="KW-1185">Reference proteome</keyword>
<keyword id="KW-0964">Secreted</keyword>
<keyword id="KW-0732">Signal</keyword>
<protein>
    <recommendedName>
        <fullName evidence="2">Antibacterial factor-related peptide 2</fullName>
    </recommendedName>
</protein>
<gene>
    <name evidence="5" type="primary">abf-2</name>
    <name evidence="5" type="ORF">C50F2.10</name>
</gene>
<reference evidence="3" key="1">
    <citation type="journal article" date="2002" name="Biochem. J.">
        <title>abf-1 and abf-2, ASABF-type antimicrobial peptide genes in Caenorhabditis elegans.</title>
        <authorList>
            <person name="Kato Y."/>
            <person name="Aizawa T."/>
            <person name="Hoshino H."/>
            <person name="Kawano K."/>
            <person name="Zhang H."/>
        </authorList>
    </citation>
    <scope>NUCLEOTIDE SEQUENCE [MRNA]</scope>
    <scope>PARTIAL PROTEIN SEQUENCE</scope>
    <scope>FUNCTION</scope>
    <scope>TISSUE SPECIFICITY</scope>
    <scope>DEVELOPMENTAL STAGE</scope>
    <scope>MASS SPECTROMETRY</scope>
    <scope>SUBCELLULAR LOCATION</scope>
    <source>
        <strain evidence="2">Bristol N2</strain>
    </source>
</reference>
<reference evidence="4" key="2">
    <citation type="journal article" date="1998" name="Science">
        <title>Genome sequence of the nematode C. elegans: a platform for investigating biology.</title>
        <authorList>
            <consortium name="The C. elegans sequencing consortium"/>
        </authorList>
    </citation>
    <scope>NUCLEOTIDE SEQUENCE [LARGE SCALE GENOMIC DNA]</scope>
    <source>
        <strain evidence="4">Bristol N2</strain>
    </source>
</reference>
<proteinExistence type="evidence at protein level"/>
<evidence type="ECO:0000269" key="1">
    <source>
    </source>
</evidence>
<evidence type="ECO:0000303" key="2">
    <source>
    </source>
</evidence>
<evidence type="ECO:0000312" key="3">
    <source>
        <dbReference type="EMBL" id="BAA89490.1"/>
    </source>
</evidence>
<evidence type="ECO:0000312" key="4">
    <source>
        <dbReference type="EMBL" id="CCD67778.1"/>
    </source>
</evidence>
<evidence type="ECO:0000312" key="5">
    <source>
        <dbReference type="WormBase" id="C50F2.10"/>
    </source>
</evidence>
<evidence type="ECO:0007829" key="6">
    <source>
        <dbReference type="PDB" id="5IX5"/>
    </source>
</evidence>
<feature type="signal peptide" evidence="1">
    <location>
        <begin position="1"/>
        <end position="17"/>
    </location>
</feature>
<feature type="peptide" id="PRO_0000430527" description="Antibacterial factor-related peptide 2" evidence="1">
    <location>
        <begin position="18"/>
        <end position="81"/>
    </location>
</feature>
<feature type="propeptide" id="PRO_0000430528" evidence="2">
    <location>
        <begin position="82"/>
        <end position="85"/>
    </location>
</feature>
<feature type="helix" evidence="6">
    <location>
        <begin position="31"/>
        <end position="33"/>
    </location>
</feature>
<feature type="helix" evidence="6">
    <location>
        <begin position="34"/>
        <end position="46"/>
    </location>
</feature>
<feature type="turn" evidence="6">
    <location>
        <begin position="47"/>
        <end position="49"/>
    </location>
</feature>
<feature type="strand" evidence="6">
    <location>
        <begin position="55"/>
        <end position="58"/>
    </location>
</feature>
<feature type="strand" evidence="6">
    <location>
        <begin position="61"/>
        <end position="64"/>
    </location>
</feature>
<feature type="strand" evidence="6">
    <location>
        <begin position="70"/>
        <end position="74"/>
    </location>
</feature>
<feature type="turn" evidence="6">
    <location>
        <begin position="78"/>
        <end position="81"/>
    </location>
</feature>
<comment type="function">
    <text evidence="1">Exhibits antimicrobial activity against the Gram-positive bacteria B.subtilis IFO 3134, K.varians MAFF 118076 and S.aureus ATCC 6538P, the Gram-negative bacteria A.tumefaciens MAFF 1001, B.bacteriovorus MAFF 106101 and K.pneumoniae MAFF 519002, and the yeasts C.krusei MAFF 114085, K.thermotolerans MAFF 113848 and T.delbrueckii MAFF 113811.</text>
</comment>
<comment type="subcellular location">
    <subcellularLocation>
        <location evidence="2">Secreted</location>
    </subcellularLocation>
</comment>
<comment type="tissue specificity">
    <text evidence="1">Expressed in the pharynx (at protein level). Detected in pharyngeal neurons and secretory cells.</text>
</comment>
<comment type="developmental stage">
    <text evidence="1">Expressed in all larval and adult stages but not in pre-hatching embryos (at protein level).</text>
</comment>
<comment type="mass spectrometry" mass="6537.3" method="Unknown" evidence="1"/>
<organism evidence="3">
    <name type="scientific">Caenorhabditis elegans</name>
    <dbReference type="NCBI Taxonomy" id="6239"/>
    <lineage>
        <taxon>Eukaryota</taxon>
        <taxon>Metazoa</taxon>
        <taxon>Ecdysozoa</taxon>
        <taxon>Nematoda</taxon>
        <taxon>Chromadorea</taxon>
        <taxon>Rhabditida</taxon>
        <taxon>Rhabditina</taxon>
        <taxon>Rhabditomorpha</taxon>
        <taxon>Rhabditoidea</taxon>
        <taxon>Rhabditidae</taxon>
        <taxon>Peloderinae</taxon>
        <taxon>Caenorhabditis</taxon>
    </lineage>
</organism>
<accession>G5EC68</accession>
<accession>Q9NL69</accession>
<dbReference type="EMBL" id="AB029810">
    <property type="protein sequence ID" value="BAA89490.1"/>
    <property type="molecule type" value="mRNA"/>
</dbReference>
<dbReference type="EMBL" id="AB029811">
    <property type="protein sequence ID" value="BAA89492.1"/>
    <property type="molecule type" value="mRNA"/>
</dbReference>
<dbReference type="EMBL" id="FO080915">
    <property type="protein sequence ID" value="CCD67778.1"/>
    <property type="molecule type" value="Genomic_DNA"/>
</dbReference>
<dbReference type="RefSeq" id="NP_491252.1">
    <property type="nucleotide sequence ID" value="NM_058851.6"/>
</dbReference>
<dbReference type="PDB" id="5IX5">
    <property type="method" value="NMR"/>
    <property type="chains" value="A=19-85"/>
</dbReference>
<dbReference type="PDBsum" id="5IX5"/>
<dbReference type="SMR" id="G5EC68"/>
<dbReference type="FunCoup" id="G5EC68">
    <property type="interactions" value="1523"/>
</dbReference>
<dbReference type="STRING" id="6239.C50F2.10.1"/>
<dbReference type="PaxDb" id="6239-C50F2.10"/>
<dbReference type="PeptideAtlas" id="G5EC68"/>
<dbReference type="EnsemblMetazoa" id="C50F2.10.1">
    <property type="protein sequence ID" value="C50F2.10.1"/>
    <property type="gene ID" value="WBGene00000013"/>
</dbReference>
<dbReference type="GeneID" id="266826"/>
<dbReference type="KEGG" id="cel:CELE_C50F2.10"/>
<dbReference type="UCSC" id="C50F2.10">
    <property type="organism name" value="c. elegans"/>
</dbReference>
<dbReference type="AGR" id="WB:WBGene00000013"/>
<dbReference type="CTD" id="266826"/>
<dbReference type="WormBase" id="C50F2.10">
    <property type="protein sequence ID" value="CE27876"/>
    <property type="gene ID" value="WBGene00000013"/>
    <property type="gene designation" value="abf-2"/>
</dbReference>
<dbReference type="eggNOG" id="ENOG502TIHM">
    <property type="taxonomic scope" value="Eukaryota"/>
</dbReference>
<dbReference type="GeneTree" id="ENSGT00970000196640"/>
<dbReference type="HOGENOM" id="CLU_172752_1_0_1"/>
<dbReference type="InParanoid" id="G5EC68"/>
<dbReference type="OMA" id="PHKSTCA"/>
<dbReference type="OrthoDB" id="5786696at2759"/>
<dbReference type="PhylomeDB" id="G5EC68"/>
<dbReference type="PRO" id="PR:G5EC68"/>
<dbReference type="Proteomes" id="UP000001940">
    <property type="component" value="Chromosome I"/>
</dbReference>
<dbReference type="Bgee" id="WBGene00000013">
    <property type="expression patterns" value="Expressed in adult organism and 1 other cell type or tissue"/>
</dbReference>
<dbReference type="GO" id="GO:0005576">
    <property type="term" value="C:extracellular region"/>
    <property type="evidence" value="ECO:0007669"/>
    <property type="project" value="UniProtKB-SubCell"/>
</dbReference>
<dbReference type="GO" id="GO:0050832">
    <property type="term" value="P:defense response to fungus"/>
    <property type="evidence" value="ECO:0007669"/>
    <property type="project" value="UniProtKB-KW"/>
</dbReference>
<dbReference type="GO" id="GO:0050829">
    <property type="term" value="P:defense response to Gram-negative bacterium"/>
    <property type="evidence" value="ECO:0000270"/>
    <property type="project" value="WormBase"/>
</dbReference>
<dbReference type="GO" id="GO:0050830">
    <property type="term" value="P:defense response to Gram-positive bacterium"/>
    <property type="evidence" value="ECO:0000270"/>
    <property type="project" value="WormBase"/>
</dbReference>
<dbReference type="GO" id="GO:0031640">
    <property type="term" value="P:killing of cells of another organism"/>
    <property type="evidence" value="ECO:0007669"/>
    <property type="project" value="UniProtKB-KW"/>
</dbReference>
<dbReference type="Gene3D" id="3.30.30.110">
    <property type="entry name" value="Antibacterial factor-related peptide"/>
    <property type="match status" value="1"/>
</dbReference>
<dbReference type="InterPro" id="IPR031770">
    <property type="entry name" value="Abf-1/2"/>
</dbReference>
<dbReference type="InterPro" id="IPR038204">
    <property type="entry name" value="Abf-1/2_sf"/>
</dbReference>
<dbReference type="PANTHER" id="PTHR37971">
    <property type="entry name" value="ANTIBACTERIAL FACTOR-RELATED PEPTIDE 1-RELATED"/>
    <property type="match status" value="1"/>
</dbReference>
<dbReference type="PANTHER" id="PTHR37971:SF1">
    <property type="entry name" value="ANTIBACTERIAL FACTOR-RELATED PEPTIDE 1-RELATED"/>
    <property type="match status" value="1"/>
</dbReference>
<dbReference type="Pfam" id="PF16839">
    <property type="entry name" value="Antimicrobial25"/>
    <property type="match status" value="1"/>
</dbReference>